<keyword id="KW-0066">ATP synthesis</keyword>
<keyword id="KW-1003">Cell membrane</keyword>
<keyword id="KW-0375">Hydrogen ion transport</keyword>
<keyword id="KW-0406">Ion transport</keyword>
<keyword id="KW-0472">Membrane</keyword>
<keyword id="KW-0813">Transport</keyword>
<accession>Q9UXU9</accession>
<accession>G8ZKU2</accession>
<organism>
    <name type="scientific">Pyrococcus abyssi (strain GE5 / Orsay)</name>
    <dbReference type="NCBI Taxonomy" id="272844"/>
    <lineage>
        <taxon>Archaea</taxon>
        <taxon>Methanobacteriati</taxon>
        <taxon>Methanobacteriota</taxon>
        <taxon>Thermococci</taxon>
        <taxon>Thermococcales</taxon>
        <taxon>Thermococcaceae</taxon>
        <taxon>Pyrococcus</taxon>
    </lineage>
</organism>
<gene>
    <name evidence="1" type="primary">atpD</name>
    <name type="ordered locus">PYRAB17590</name>
    <name type="ORF">PAB2379</name>
</gene>
<evidence type="ECO:0000255" key="1">
    <source>
        <dbReference type="HAMAP-Rule" id="MF_00271"/>
    </source>
</evidence>
<feature type="chain" id="PRO_0000144254" description="A-type ATP synthase subunit D">
    <location>
        <begin position="1"/>
        <end position="214"/>
    </location>
</feature>
<proteinExistence type="inferred from homology"/>
<name>AATD_PYRAB</name>
<sequence length="214" mass="25203">MPEILKIKPTRMELLKLKRRVKLAERGHKLLKEKQDALIMEFFTIYDEALSLRRELIKKMEEAFEALRRAQVDVGSLRLKEISIGVKPNEEIEIRTRNIMGVRVPLIEVPELKRKASDRGYAFISTTSTVDVAAEKFEEVLELAIRLAEVEESLKRLGKEIEKTKRRVNALEYIIIPRMKNTIKFIEQHLDEMERENFFRLKRVKAILEARQSM</sequence>
<protein>
    <recommendedName>
        <fullName evidence="1">A-type ATP synthase subunit D</fullName>
    </recommendedName>
</protein>
<comment type="function">
    <text evidence="1">Component of the A-type ATP synthase that produces ATP from ADP in the presence of a proton gradient across the membrane.</text>
</comment>
<comment type="subunit">
    <text evidence="1">Has multiple subunits with at least A(3), B(3), C, D, E, F, H, I and proteolipid K(x).</text>
</comment>
<comment type="subcellular location">
    <subcellularLocation>
        <location evidence="1">Cell membrane</location>
        <topology evidence="1">Peripheral membrane protein</topology>
    </subcellularLocation>
</comment>
<comment type="similarity">
    <text evidence="1">Belongs to the V-ATPase D subunit family.</text>
</comment>
<reference key="1">
    <citation type="journal article" date="2003" name="Mol. Microbiol.">
        <title>An integrated analysis of the genome of the hyperthermophilic archaeon Pyrococcus abyssi.</title>
        <authorList>
            <person name="Cohen G.N."/>
            <person name="Barbe V."/>
            <person name="Flament D."/>
            <person name="Galperin M."/>
            <person name="Heilig R."/>
            <person name="Lecompte O."/>
            <person name="Poch O."/>
            <person name="Prieur D."/>
            <person name="Querellou J."/>
            <person name="Ripp R."/>
            <person name="Thierry J.-C."/>
            <person name="Van der Oost J."/>
            <person name="Weissenbach J."/>
            <person name="Zivanovic Y."/>
            <person name="Forterre P."/>
        </authorList>
    </citation>
    <scope>NUCLEOTIDE SEQUENCE [LARGE SCALE GENOMIC DNA]</scope>
    <source>
        <strain>GE5 / Orsay</strain>
    </source>
</reference>
<reference key="2">
    <citation type="journal article" date="2012" name="Curr. Microbiol.">
        <title>Re-annotation of two hyperthermophilic archaea Pyrococcus abyssi GE5 and Pyrococcus furiosus DSM 3638.</title>
        <authorList>
            <person name="Gao J."/>
            <person name="Wang J."/>
        </authorList>
    </citation>
    <scope>GENOME REANNOTATION</scope>
    <source>
        <strain>GE5 / Orsay</strain>
    </source>
</reference>
<dbReference type="EMBL" id="AJ248288">
    <property type="protein sequence ID" value="CAB50664.1"/>
    <property type="molecule type" value="Genomic_DNA"/>
</dbReference>
<dbReference type="EMBL" id="HE613800">
    <property type="protein sequence ID" value="CCE71233.1"/>
    <property type="molecule type" value="Genomic_DNA"/>
</dbReference>
<dbReference type="PIR" id="B75028">
    <property type="entry name" value="B75028"/>
</dbReference>
<dbReference type="RefSeq" id="WP_010868878.1">
    <property type="nucleotide sequence ID" value="NC_000868.1"/>
</dbReference>
<dbReference type="SMR" id="Q9UXU9"/>
<dbReference type="STRING" id="272844.PAB2379"/>
<dbReference type="KEGG" id="pab:PAB2379"/>
<dbReference type="PATRIC" id="fig|272844.11.peg.1878"/>
<dbReference type="eggNOG" id="arCOG04101">
    <property type="taxonomic scope" value="Archaea"/>
</dbReference>
<dbReference type="HOGENOM" id="CLU_069688_2_1_2"/>
<dbReference type="OrthoDB" id="117390at2157"/>
<dbReference type="PhylomeDB" id="Q9UXU9"/>
<dbReference type="Proteomes" id="UP000000810">
    <property type="component" value="Chromosome"/>
</dbReference>
<dbReference type="Proteomes" id="UP000009139">
    <property type="component" value="Chromosome"/>
</dbReference>
<dbReference type="GO" id="GO:0005886">
    <property type="term" value="C:plasma membrane"/>
    <property type="evidence" value="ECO:0007669"/>
    <property type="project" value="UniProtKB-SubCell"/>
</dbReference>
<dbReference type="GO" id="GO:0005524">
    <property type="term" value="F:ATP binding"/>
    <property type="evidence" value="ECO:0007669"/>
    <property type="project" value="UniProtKB-UniRule"/>
</dbReference>
<dbReference type="GO" id="GO:0046933">
    <property type="term" value="F:proton-transporting ATP synthase activity, rotational mechanism"/>
    <property type="evidence" value="ECO:0007669"/>
    <property type="project" value="UniProtKB-UniRule"/>
</dbReference>
<dbReference type="GO" id="GO:0046961">
    <property type="term" value="F:proton-transporting ATPase activity, rotational mechanism"/>
    <property type="evidence" value="ECO:0007669"/>
    <property type="project" value="InterPro"/>
</dbReference>
<dbReference type="GO" id="GO:0042777">
    <property type="term" value="P:proton motive force-driven plasma membrane ATP synthesis"/>
    <property type="evidence" value="ECO:0007669"/>
    <property type="project" value="UniProtKB-UniRule"/>
</dbReference>
<dbReference type="FunFam" id="1.10.287.3240:FF:000007">
    <property type="entry name" value="V-type ATP synthase subunit D"/>
    <property type="match status" value="1"/>
</dbReference>
<dbReference type="Gene3D" id="1.10.287.3240">
    <property type="match status" value="1"/>
</dbReference>
<dbReference type="HAMAP" id="MF_00271">
    <property type="entry name" value="ATP_synth_D_arch"/>
    <property type="match status" value="1"/>
</dbReference>
<dbReference type="InterPro" id="IPR002699">
    <property type="entry name" value="V_ATPase_D"/>
</dbReference>
<dbReference type="NCBIfam" id="NF001545">
    <property type="entry name" value="PRK00373.1-4"/>
    <property type="match status" value="1"/>
</dbReference>
<dbReference type="NCBIfam" id="TIGR00309">
    <property type="entry name" value="V_ATPase_subD"/>
    <property type="match status" value="1"/>
</dbReference>
<dbReference type="PANTHER" id="PTHR11671">
    <property type="entry name" value="V-TYPE ATP SYNTHASE SUBUNIT D"/>
    <property type="match status" value="1"/>
</dbReference>
<dbReference type="Pfam" id="PF01813">
    <property type="entry name" value="ATP-synt_D"/>
    <property type="match status" value="1"/>
</dbReference>